<accession>A6QGG4</accession>
<comment type="function">
    <text evidence="1">Required for replicative DNA synthesis. This DNA polymerase also exhibits 3' to 5' exonuclease activity.</text>
</comment>
<comment type="catalytic activity">
    <reaction evidence="1">
        <text>DNA(n) + a 2'-deoxyribonucleoside 5'-triphosphate = DNA(n+1) + diphosphate</text>
        <dbReference type="Rhea" id="RHEA:22508"/>
        <dbReference type="Rhea" id="RHEA-COMP:17339"/>
        <dbReference type="Rhea" id="RHEA-COMP:17340"/>
        <dbReference type="ChEBI" id="CHEBI:33019"/>
        <dbReference type="ChEBI" id="CHEBI:61560"/>
        <dbReference type="ChEBI" id="CHEBI:173112"/>
        <dbReference type="EC" id="2.7.7.7"/>
    </reaction>
</comment>
<comment type="subcellular location">
    <subcellularLocation>
        <location evidence="1">Cytoplasm</location>
    </subcellularLocation>
</comment>
<comment type="similarity">
    <text evidence="1">Belongs to the DNA polymerase type-C family. PolC subfamily.</text>
</comment>
<protein>
    <recommendedName>
        <fullName evidence="1">DNA polymerase III PolC-type</fullName>
        <shortName evidence="1">PolIII</shortName>
        <ecNumber evidence="1">2.7.7.7</ecNumber>
    </recommendedName>
</protein>
<dbReference type="EC" id="2.7.7.7" evidence="1"/>
<dbReference type="EMBL" id="AP009351">
    <property type="protein sequence ID" value="BAF67446.1"/>
    <property type="molecule type" value="Genomic_DNA"/>
</dbReference>
<dbReference type="SMR" id="A6QGG4"/>
<dbReference type="KEGG" id="sae:NWMN_1174"/>
<dbReference type="HOGENOM" id="CLU_003297_2_0_9"/>
<dbReference type="Proteomes" id="UP000006386">
    <property type="component" value="Chromosome"/>
</dbReference>
<dbReference type="GO" id="GO:0005737">
    <property type="term" value="C:cytoplasm"/>
    <property type="evidence" value="ECO:0007669"/>
    <property type="project" value="UniProtKB-SubCell"/>
</dbReference>
<dbReference type="GO" id="GO:0008408">
    <property type="term" value="F:3'-5' exonuclease activity"/>
    <property type="evidence" value="ECO:0007669"/>
    <property type="project" value="UniProtKB-UniRule"/>
</dbReference>
<dbReference type="GO" id="GO:0003677">
    <property type="term" value="F:DNA binding"/>
    <property type="evidence" value="ECO:0007669"/>
    <property type="project" value="UniProtKB-UniRule"/>
</dbReference>
<dbReference type="GO" id="GO:0003887">
    <property type="term" value="F:DNA-directed DNA polymerase activity"/>
    <property type="evidence" value="ECO:0007669"/>
    <property type="project" value="UniProtKB-UniRule"/>
</dbReference>
<dbReference type="GO" id="GO:0006261">
    <property type="term" value="P:DNA-templated DNA replication"/>
    <property type="evidence" value="ECO:0007669"/>
    <property type="project" value="UniProtKB-UniRule"/>
</dbReference>
<dbReference type="CDD" id="cd06127">
    <property type="entry name" value="DEDDh"/>
    <property type="match status" value="1"/>
</dbReference>
<dbReference type="CDD" id="cd07435">
    <property type="entry name" value="PHP_PolIIIA_POLC"/>
    <property type="match status" value="1"/>
</dbReference>
<dbReference type="CDD" id="cd04484">
    <property type="entry name" value="polC_OBF"/>
    <property type="match status" value="1"/>
</dbReference>
<dbReference type="FunFam" id="3.30.420.10:FF:000045">
    <property type="entry name" value="3'-5' exonuclease DinG"/>
    <property type="match status" value="1"/>
</dbReference>
<dbReference type="Gene3D" id="1.10.150.870">
    <property type="match status" value="1"/>
</dbReference>
<dbReference type="Gene3D" id="3.30.1900.20">
    <property type="match status" value="2"/>
</dbReference>
<dbReference type="Gene3D" id="6.10.140.1510">
    <property type="match status" value="1"/>
</dbReference>
<dbReference type="Gene3D" id="3.20.20.140">
    <property type="entry name" value="Metal-dependent hydrolases"/>
    <property type="match status" value="1"/>
</dbReference>
<dbReference type="Gene3D" id="2.40.50.140">
    <property type="entry name" value="Nucleic acid-binding proteins"/>
    <property type="match status" value="1"/>
</dbReference>
<dbReference type="Gene3D" id="1.10.150.700">
    <property type="entry name" value="PolC, middle finger domain"/>
    <property type="match status" value="1"/>
</dbReference>
<dbReference type="Gene3D" id="3.30.420.10">
    <property type="entry name" value="Ribonuclease H-like superfamily/Ribonuclease H"/>
    <property type="match status" value="1"/>
</dbReference>
<dbReference type="HAMAP" id="MF_00356">
    <property type="entry name" value="DNApol_PolC"/>
    <property type="match status" value="1"/>
</dbReference>
<dbReference type="InterPro" id="IPR011708">
    <property type="entry name" value="DNA_pol3_alpha_NTPase_dom"/>
</dbReference>
<dbReference type="InterPro" id="IPR040982">
    <property type="entry name" value="DNA_pol3_finger"/>
</dbReference>
<dbReference type="InterPro" id="IPR024754">
    <property type="entry name" value="DNA_PolC-like_N_II"/>
</dbReference>
<dbReference type="InterPro" id="IPR028112">
    <property type="entry name" value="DNA_PolC-type_N_I"/>
</dbReference>
<dbReference type="InterPro" id="IPR004805">
    <property type="entry name" value="DnaE2/DnaE/PolC"/>
</dbReference>
<dbReference type="InterPro" id="IPR029460">
    <property type="entry name" value="DNAPol_HHH"/>
</dbReference>
<dbReference type="InterPro" id="IPR006054">
    <property type="entry name" value="DnaQ"/>
</dbReference>
<dbReference type="InterPro" id="IPR013520">
    <property type="entry name" value="Exonuclease_RNaseT/DNA_pol3"/>
</dbReference>
<dbReference type="InterPro" id="IPR012340">
    <property type="entry name" value="NA-bd_OB-fold"/>
</dbReference>
<dbReference type="InterPro" id="IPR004013">
    <property type="entry name" value="PHP_dom"/>
</dbReference>
<dbReference type="InterPro" id="IPR003141">
    <property type="entry name" value="Pol/His_phosphatase_N"/>
</dbReference>
<dbReference type="InterPro" id="IPR006308">
    <property type="entry name" value="Pol_III_a_PolC-type_gram_pos"/>
</dbReference>
<dbReference type="InterPro" id="IPR044923">
    <property type="entry name" value="PolC_middle_finger_sf"/>
</dbReference>
<dbReference type="InterPro" id="IPR012337">
    <property type="entry name" value="RNaseH-like_sf"/>
</dbReference>
<dbReference type="InterPro" id="IPR036397">
    <property type="entry name" value="RNaseH_sf"/>
</dbReference>
<dbReference type="NCBIfam" id="TIGR00573">
    <property type="entry name" value="dnaq"/>
    <property type="match status" value="1"/>
</dbReference>
<dbReference type="NCBIfam" id="TIGR01405">
    <property type="entry name" value="polC_Gram_pos"/>
    <property type="match status" value="1"/>
</dbReference>
<dbReference type="NCBIfam" id="NF001688">
    <property type="entry name" value="PRK00448.1"/>
    <property type="match status" value="1"/>
</dbReference>
<dbReference type="PANTHER" id="PTHR32294:SF5">
    <property type="entry name" value="DNA POLYMERASE III POLC-TYPE"/>
    <property type="match status" value="1"/>
</dbReference>
<dbReference type="PANTHER" id="PTHR32294">
    <property type="entry name" value="DNA POLYMERASE III SUBUNIT ALPHA"/>
    <property type="match status" value="1"/>
</dbReference>
<dbReference type="Pfam" id="PF14480">
    <property type="entry name" value="DNA_pol3_a_NI"/>
    <property type="match status" value="1"/>
</dbReference>
<dbReference type="Pfam" id="PF11490">
    <property type="entry name" value="DNA_pol3_a_NII"/>
    <property type="match status" value="1"/>
</dbReference>
<dbReference type="Pfam" id="PF07733">
    <property type="entry name" value="DNA_pol3_alpha"/>
    <property type="match status" value="2"/>
</dbReference>
<dbReference type="Pfam" id="PF17657">
    <property type="entry name" value="DNA_pol3_finger"/>
    <property type="match status" value="1"/>
</dbReference>
<dbReference type="Pfam" id="PF14579">
    <property type="entry name" value="HHH_6"/>
    <property type="match status" value="1"/>
</dbReference>
<dbReference type="Pfam" id="PF02811">
    <property type="entry name" value="PHP"/>
    <property type="match status" value="2"/>
</dbReference>
<dbReference type="Pfam" id="PF00929">
    <property type="entry name" value="RNase_T"/>
    <property type="match status" value="1"/>
</dbReference>
<dbReference type="SMART" id="SM00479">
    <property type="entry name" value="EXOIII"/>
    <property type="match status" value="1"/>
</dbReference>
<dbReference type="SMART" id="SM00481">
    <property type="entry name" value="POLIIIAc"/>
    <property type="match status" value="1"/>
</dbReference>
<dbReference type="SUPFAM" id="SSF81585">
    <property type="entry name" value="PsbU/PolX domain-like"/>
    <property type="match status" value="1"/>
</dbReference>
<dbReference type="SUPFAM" id="SSF53098">
    <property type="entry name" value="Ribonuclease H-like"/>
    <property type="match status" value="1"/>
</dbReference>
<reference key="1">
    <citation type="journal article" date="2008" name="J. Bacteriol.">
        <title>Genome sequence of Staphylococcus aureus strain Newman and comparative analysis of staphylococcal genomes: polymorphism and evolution of two major pathogenicity islands.</title>
        <authorList>
            <person name="Baba T."/>
            <person name="Bae T."/>
            <person name="Schneewind O."/>
            <person name="Takeuchi F."/>
            <person name="Hiramatsu K."/>
        </authorList>
    </citation>
    <scope>NUCLEOTIDE SEQUENCE [LARGE SCALE GENOMIC DNA]</scope>
    <source>
        <strain>Newman</strain>
    </source>
</reference>
<gene>
    <name evidence="1" type="primary">polC</name>
    <name type="ordered locus">NWMN_1174</name>
</gene>
<organism>
    <name type="scientific">Staphylococcus aureus (strain Newman)</name>
    <dbReference type="NCBI Taxonomy" id="426430"/>
    <lineage>
        <taxon>Bacteria</taxon>
        <taxon>Bacillati</taxon>
        <taxon>Bacillota</taxon>
        <taxon>Bacilli</taxon>
        <taxon>Bacillales</taxon>
        <taxon>Staphylococcaceae</taxon>
        <taxon>Staphylococcus</taxon>
    </lineage>
</organism>
<name>DPO3_STAAE</name>
<evidence type="ECO:0000255" key="1">
    <source>
        <dbReference type="HAMAP-Rule" id="MF_00356"/>
    </source>
</evidence>
<proteinExistence type="inferred from homology"/>
<keyword id="KW-0963">Cytoplasm</keyword>
<keyword id="KW-0235">DNA replication</keyword>
<keyword id="KW-0239">DNA-directed DNA polymerase</keyword>
<keyword id="KW-0269">Exonuclease</keyword>
<keyword id="KW-0378">Hydrolase</keyword>
<keyword id="KW-0540">Nuclease</keyword>
<keyword id="KW-0548">Nucleotidyltransferase</keyword>
<keyword id="KW-0808">Transferase</keyword>
<sequence>MAMTEQQKFKVLADQIKISNQLDAEILNSGELTRIDVSNKNRTWEFHITLPQFLAHEDYLLFINAIEQEFKDIANVTCRFTVTNGTNQDEHAIKYFGHCIDQTALSPKVKGQLKQKKLIMSGKVLKVMVSNDIERNHFDKACNGSLIKAFRNCGFDIDKIIFETNDNDQEQNLASLEAHIQEEDEQSARLATEKLEKMKAEKAKQQDNNESAVDKCQIGKPIQIENIKPIESIIEEEFKVAIEGVIFDINLKELKSGRHIVEIKVTDYTDSLVLKMFTRKNKDDLEHFKALSVGKWVRAQGRIEEDTFIRDLVMMMSDIEEIKKATKKDKAEEKRVEFHLHTAMSQMDGIPNIGAYVKQAADWGHPAIAVTDHNVVQAFPDAHAAAEKHGIKMIYGMEGMLVDDGVPIAYKPQDVVLKDATYVVFDVETTGLSNQYDKIIELAAVKVHNGEIIDKFERFSNPHERLSETIINLTHITDDMLVDAPEIEEVLTEFKEWVGDAIFVAHNASFDMGFIDTGYERLGFGPSTNGVIDTLELSRTINTEYGKHGLNFLAKKYGVELTQHHRAIYDTEATAYIFIKMVQQMKELGVLNHNEINKKLSNEDAYKRARPSHVTLIVQNQQGLKNLFKIVSASLVKYFYRTPRIPRSLLDEYREGLLVGTACDEGELFTAVMQKDQSQVEKIAKYYDFIEIQPPALYQDLIDRELIRDTETLHEIYQRLIHAGDTAGIPVIATGNAHYLFEHDGIARKILIASQPGNPLNRSTLPEAHFRTTDEMLNEFHFLGEEKAHEIVVKNTNELADRIERVVPIKDELYTPRMEGANEEIRELSYANARKLYGEDLPQIVIDRLEKELKSIIGNGFAVIYLISQRLVKKSLDDGYLVGSRGSVGSSFVATMTEITEVNPLPPHYICPNCKTSEFFNDGSVGSGFDLPDKTCETCGAPLIKEGQDIPFETFLGFKGDKVPDIDLNFSGEYQPNAHNYTKVLFGEDKVFRAGTIGTVAEKTAFGYVKGYLNDQGIHKRGAEIDRLVKGCTGVKRTTGQHPGGIIVVPDYMDIYDFTPIQYPADDQNSAWMTTHFDFHSIHDNVLKLDILGHDDPTMIRMLQDLSGIDPKTIPVDDKEVMQIFSTPESLGVTEDEILCKTGTFGVPEFGTGFVRQMLEDTKPTTFSELVQISGLSHGTDVWLGNAQELIKTGICDLSSVIGCRDDIMVYLMYAGLEPSMAFKIMESVRKGKGLTEEMIETMKENEVPDWYLDSCLKIKYMFPKAHAAAYVLMAVRIAYFKVHHPLYYYASYFTIRASDFDLITMIKDKTSIRNTVKDMYSRYMDLGKKEKDVLTVLEIMNEMAHRGYRMQPISLEKSQAFEFIIEGDTLIPPFISVPGLGENVAKRIVEARDDGPFLSKEDLNKKAGLSQKIIEYLDELGSLPNLPDKAQLSIFDM</sequence>
<feature type="chain" id="PRO_1000072072" description="DNA polymerase III PolC-type">
    <location>
        <begin position="1"/>
        <end position="1438"/>
    </location>
</feature>
<feature type="domain" description="Exonuclease">
    <location>
        <begin position="422"/>
        <end position="578"/>
    </location>
</feature>